<reference key="1">
    <citation type="journal article" date="2005" name="Nat. Biotechnol.">
        <title>Complete genome sequence of the acetic acid bacterium Gluconobacter oxydans.</title>
        <authorList>
            <person name="Prust C."/>
            <person name="Hoffmeister M."/>
            <person name="Liesegang H."/>
            <person name="Wiezer A."/>
            <person name="Fricke W.F."/>
            <person name="Ehrenreich A."/>
            <person name="Gottschalk G."/>
            <person name="Deppenmeier U."/>
        </authorList>
    </citation>
    <scope>NUCLEOTIDE SEQUENCE [LARGE SCALE GENOMIC DNA]</scope>
    <source>
        <strain>621H</strain>
    </source>
</reference>
<sequence length="178" mass="19419">MSRVGKYPVEVPAGVQVSVADGFFKAKGKLGELTVPVSRHVEVKIEGSNVSVAPVGRRSRENWTMWGTTRALIANTVKGVSDGFSKGLEIQGTGFRAAVQGSNLVMNLGFSHDVVYPIPEGIKITTPRPTAIVVEGNDKQRVGQVALDIRSFRKPEPYKGKGVRYETEVLRRKEGKKK</sequence>
<feature type="chain" id="PRO_0000265254" description="Large ribosomal subunit protein uL6">
    <location>
        <begin position="1"/>
        <end position="178"/>
    </location>
</feature>
<proteinExistence type="inferred from homology"/>
<organism>
    <name type="scientific">Gluconobacter oxydans (strain 621H)</name>
    <name type="common">Gluconobacter suboxydans</name>
    <dbReference type="NCBI Taxonomy" id="290633"/>
    <lineage>
        <taxon>Bacteria</taxon>
        <taxon>Pseudomonadati</taxon>
        <taxon>Pseudomonadota</taxon>
        <taxon>Alphaproteobacteria</taxon>
        <taxon>Acetobacterales</taxon>
        <taxon>Acetobacteraceae</taxon>
        <taxon>Gluconobacter</taxon>
    </lineage>
</organism>
<dbReference type="EMBL" id="CP000009">
    <property type="protein sequence ID" value="AAW60148.1"/>
    <property type="molecule type" value="Genomic_DNA"/>
</dbReference>
<dbReference type="RefSeq" id="WP_011251951.1">
    <property type="nucleotide sequence ID" value="NZ_LT900338.1"/>
</dbReference>
<dbReference type="SMR" id="Q5FTZ8"/>
<dbReference type="STRING" id="290633.GOX0365"/>
<dbReference type="GeneID" id="56904631"/>
<dbReference type="KEGG" id="gox:GOX0365"/>
<dbReference type="eggNOG" id="COG0097">
    <property type="taxonomic scope" value="Bacteria"/>
</dbReference>
<dbReference type="HOGENOM" id="CLU_065464_1_2_5"/>
<dbReference type="Proteomes" id="UP000006375">
    <property type="component" value="Chromosome"/>
</dbReference>
<dbReference type="GO" id="GO:0022625">
    <property type="term" value="C:cytosolic large ribosomal subunit"/>
    <property type="evidence" value="ECO:0007669"/>
    <property type="project" value="TreeGrafter"/>
</dbReference>
<dbReference type="GO" id="GO:0019843">
    <property type="term" value="F:rRNA binding"/>
    <property type="evidence" value="ECO:0007669"/>
    <property type="project" value="UniProtKB-UniRule"/>
</dbReference>
<dbReference type="GO" id="GO:0003735">
    <property type="term" value="F:structural constituent of ribosome"/>
    <property type="evidence" value="ECO:0007669"/>
    <property type="project" value="InterPro"/>
</dbReference>
<dbReference type="GO" id="GO:0002181">
    <property type="term" value="P:cytoplasmic translation"/>
    <property type="evidence" value="ECO:0007669"/>
    <property type="project" value="TreeGrafter"/>
</dbReference>
<dbReference type="FunFam" id="3.90.930.12:FF:000001">
    <property type="entry name" value="50S ribosomal protein L6"/>
    <property type="match status" value="1"/>
</dbReference>
<dbReference type="Gene3D" id="3.90.930.12">
    <property type="entry name" value="Ribosomal protein L6, alpha-beta domain"/>
    <property type="match status" value="2"/>
</dbReference>
<dbReference type="HAMAP" id="MF_01365_B">
    <property type="entry name" value="Ribosomal_uL6_B"/>
    <property type="match status" value="1"/>
</dbReference>
<dbReference type="InterPro" id="IPR000702">
    <property type="entry name" value="Ribosomal_uL6-like"/>
</dbReference>
<dbReference type="InterPro" id="IPR036789">
    <property type="entry name" value="Ribosomal_uL6-like_a/b-dom_sf"/>
</dbReference>
<dbReference type="InterPro" id="IPR020040">
    <property type="entry name" value="Ribosomal_uL6_a/b-dom"/>
</dbReference>
<dbReference type="InterPro" id="IPR019906">
    <property type="entry name" value="Ribosomal_uL6_bac-type"/>
</dbReference>
<dbReference type="InterPro" id="IPR002358">
    <property type="entry name" value="Ribosomal_uL6_CS"/>
</dbReference>
<dbReference type="NCBIfam" id="TIGR03654">
    <property type="entry name" value="L6_bact"/>
    <property type="match status" value="1"/>
</dbReference>
<dbReference type="PANTHER" id="PTHR11655">
    <property type="entry name" value="60S/50S RIBOSOMAL PROTEIN L6/L9"/>
    <property type="match status" value="1"/>
</dbReference>
<dbReference type="PANTHER" id="PTHR11655:SF14">
    <property type="entry name" value="LARGE RIBOSOMAL SUBUNIT PROTEIN UL6M"/>
    <property type="match status" value="1"/>
</dbReference>
<dbReference type="Pfam" id="PF00347">
    <property type="entry name" value="Ribosomal_L6"/>
    <property type="match status" value="2"/>
</dbReference>
<dbReference type="PIRSF" id="PIRSF002162">
    <property type="entry name" value="Ribosomal_L6"/>
    <property type="match status" value="1"/>
</dbReference>
<dbReference type="PRINTS" id="PR00059">
    <property type="entry name" value="RIBOSOMALL6"/>
</dbReference>
<dbReference type="SUPFAM" id="SSF56053">
    <property type="entry name" value="Ribosomal protein L6"/>
    <property type="match status" value="2"/>
</dbReference>
<dbReference type="PROSITE" id="PS00525">
    <property type="entry name" value="RIBOSOMAL_L6_1"/>
    <property type="match status" value="1"/>
</dbReference>
<protein>
    <recommendedName>
        <fullName evidence="1">Large ribosomal subunit protein uL6</fullName>
    </recommendedName>
    <alternativeName>
        <fullName evidence="2">50S ribosomal protein L6</fullName>
    </alternativeName>
</protein>
<accession>Q5FTZ8</accession>
<comment type="function">
    <text evidence="1">This protein binds to the 23S rRNA, and is important in its secondary structure. It is located near the subunit interface in the base of the L7/L12 stalk, and near the tRNA binding site of the peptidyltransferase center.</text>
</comment>
<comment type="subunit">
    <text evidence="1">Part of the 50S ribosomal subunit.</text>
</comment>
<comment type="similarity">
    <text evidence="1">Belongs to the universal ribosomal protein uL6 family.</text>
</comment>
<keyword id="KW-1185">Reference proteome</keyword>
<keyword id="KW-0687">Ribonucleoprotein</keyword>
<keyword id="KW-0689">Ribosomal protein</keyword>
<keyword id="KW-0694">RNA-binding</keyword>
<keyword id="KW-0699">rRNA-binding</keyword>
<evidence type="ECO:0000255" key="1">
    <source>
        <dbReference type="HAMAP-Rule" id="MF_01365"/>
    </source>
</evidence>
<evidence type="ECO:0000305" key="2"/>
<name>RL6_GLUOX</name>
<gene>
    <name evidence="1" type="primary">rplF</name>
    <name type="ordered locus">GOX0365</name>
</gene>